<name>FGF4_CHICK</name>
<proteinExistence type="evidence at transcript level"/>
<sequence>MLSAAALLPALLLGLLWPGAVRGRPPPGRLPPGPRQRRWDAALFARSVARLPAERRDAARDGDYLLGYKRLRRLYCNVGIGFHIQVLPDGRIDGIHSENRYSLLEISPVERGVVSIFGVRSGLFVAMNSKGKLYGSTHVNDECKFKEILLPNNYNAYESRIYPGMYIALSKNGRTKKGNKVSPTMTVTHFLPRI</sequence>
<organism>
    <name type="scientific">Gallus gallus</name>
    <name type="common">Chicken</name>
    <dbReference type="NCBI Taxonomy" id="9031"/>
    <lineage>
        <taxon>Eukaryota</taxon>
        <taxon>Metazoa</taxon>
        <taxon>Chordata</taxon>
        <taxon>Craniata</taxon>
        <taxon>Vertebrata</taxon>
        <taxon>Euteleostomi</taxon>
        <taxon>Archelosauria</taxon>
        <taxon>Archosauria</taxon>
        <taxon>Dinosauria</taxon>
        <taxon>Saurischia</taxon>
        <taxon>Theropoda</taxon>
        <taxon>Coelurosauria</taxon>
        <taxon>Aves</taxon>
        <taxon>Neognathae</taxon>
        <taxon>Galloanserae</taxon>
        <taxon>Galliformes</taxon>
        <taxon>Phasianidae</taxon>
        <taxon>Phasianinae</taxon>
        <taxon>Gallus</taxon>
    </lineage>
</organism>
<feature type="signal peptide" evidence="2">
    <location>
        <begin position="1"/>
        <end position="23"/>
    </location>
</feature>
<feature type="chain" id="PRO_0000008955" description="Fibroblast growth factor 4">
    <location>
        <begin position="24"/>
        <end position="194"/>
    </location>
</feature>
<evidence type="ECO:0000250" key="1"/>
<evidence type="ECO:0000255" key="2"/>
<evidence type="ECO:0000305" key="3"/>
<reference key="1">
    <citation type="journal article" date="1994" name="Nature">
        <title>A positive feedback loop coordinates growth and patterning in the vertebrate limb.</title>
        <authorList>
            <person name="Niswander L."/>
            <person name="Jeffrey S."/>
            <person name="Martin G.R."/>
            <person name="Tickle C."/>
        </authorList>
    </citation>
    <scope>NUCLEOTIDE SEQUENCE [GENOMIC DNA]</scope>
</reference>
<gene>
    <name type="primary">FGF4</name>
    <name type="synonym">FGF-4</name>
</gene>
<protein>
    <recommendedName>
        <fullName>Fibroblast growth factor 4</fullName>
        <shortName>FGF-4</shortName>
    </recommendedName>
    <alternativeName>
        <fullName>Heparin-binding growth factor 4</fullName>
        <shortName>HBGF-4</shortName>
    </alternativeName>
</protein>
<comment type="function">
    <text evidence="1">Plays an important role in the regulation of embryonic development, cell proliferation, and cell differentiation. Required for normal limb development during embryogenesis (By similarity).</text>
</comment>
<comment type="subunit">
    <text>Reciprocal interactions may create a positive feedback loop between sonic hedgehog (SHH) and FGF4.</text>
</comment>
<comment type="subcellular location">
    <subcellularLocation>
        <location evidence="3">Secreted</location>
    </subcellularLocation>
</comment>
<comment type="tissue specificity">
    <text>Posterior ridge.</text>
</comment>
<comment type="induction">
    <text>By retinoic acid.</text>
</comment>
<comment type="similarity">
    <text evidence="3">Belongs to the heparin-binding growth factors family.</text>
</comment>
<keyword id="KW-0217">Developmental protein</keyword>
<keyword id="KW-0221">Differentiation</keyword>
<keyword id="KW-0339">Growth factor</keyword>
<keyword id="KW-0497">Mitogen</keyword>
<keyword id="KW-1185">Reference proteome</keyword>
<keyword id="KW-0964">Secreted</keyword>
<keyword id="KW-0732">Signal</keyword>
<accession>P48804</accession>
<dbReference type="EMBL" id="U14654">
    <property type="protein sequence ID" value="AAA58706.1"/>
    <property type="molecule type" value="Genomic_DNA"/>
</dbReference>
<dbReference type="PIR" id="S78506">
    <property type="entry name" value="I50710"/>
</dbReference>
<dbReference type="SMR" id="P48804"/>
<dbReference type="STRING" id="9031.ENSGALP00000012214"/>
<dbReference type="VEuPathDB" id="HostDB:geneid_428857"/>
<dbReference type="InParanoid" id="P48804"/>
<dbReference type="OrthoDB" id="5960247at2759"/>
<dbReference type="PhylomeDB" id="P48804"/>
<dbReference type="PRO" id="PR:P48804"/>
<dbReference type="Proteomes" id="UP000000539">
    <property type="component" value="Unassembled WGS sequence"/>
</dbReference>
<dbReference type="GO" id="GO:0005737">
    <property type="term" value="C:cytoplasm"/>
    <property type="evidence" value="ECO:0000318"/>
    <property type="project" value="GO_Central"/>
</dbReference>
<dbReference type="GO" id="GO:0005615">
    <property type="term" value="C:extracellular space"/>
    <property type="evidence" value="ECO:0000318"/>
    <property type="project" value="GO_Central"/>
</dbReference>
<dbReference type="GO" id="GO:0005104">
    <property type="term" value="F:fibroblast growth factor receptor binding"/>
    <property type="evidence" value="ECO:0000318"/>
    <property type="project" value="GO_Central"/>
</dbReference>
<dbReference type="GO" id="GO:0008083">
    <property type="term" value="F:growth factor activity"/>
    <property type="evidence" value="ECO:0000318"/>
    <property type="project" value="GO_Central"/>
</dbReference>
<dbReference type="GO" id="GO:0008543">
    <property type="term" value="P:fibroblast growth factor receptor signaling pathway"/>
    <property type="evidence" value="ECO:0000318"/>
    <property type="project" value="GO_Central"/>
</dbReference>
<dbReference type="GO" id="GO:0022008">
    <property type="term" value="P:neurogenesis"/>
    <property type="evidence" value="ECO:0000318"/>
    <property type="project" value="GO_Central"/>
</dbReference>
<dbReference type="GO" id="GO:0051781">
    <property type="term" value="P:positive regulation of cell division"/>
    <property type="evidence" value="ECO:0007669"/>
    <property type="project" value="UniProtKB-KW"/>
</dbReference>
<dbReference type="GO" id="GO:0008284">
    <property type="term" value="P:positive regulation of cell population proliferation"/>
    <property type="evidence" value="ECO:0000318"/>
    <property type="project" value="GO_Central"/>
</dbReference>
<dbReference type="GO" id="GO:0043410">
    <property type="term" value="P:positive regulation of MAPK cascade"/>
    <property type="evidence" value="ECO:0000318"/>
    <property type="project" value="GO_Central"/>
</dbReference>
<dbReference type="GO" id="GO:0030334">
    <property type="term" value="P:regulation of cell migration"/>
    <property type="evidence" value="ECO:0000318"/>
    <property type="project" value="GO_Central"/>
</dbReference>
<dbReference type="CDD" id="cd23316">
    <property type="entry name" value="beta-trefoil_FGF4"/>
    <property type="match status" value="1"/>
</dbReference>
<dbReference type="FunFam" id="2.80.10.50:FF:000033">
    <property type="entry name" value="Fibroblast growth factor"/>
    <property type="match status" value="1"/>
</dbReference>
<dbReference type="Gene3D" id="2.80.10.50">
    <property type="match status" value="1"/>
</dbReference>
<dbReference type="InterPro" id="IPR002209">
    <property type="entry name" value="Fibroblast_GF_fam"/>
</dbReference>
<dbReference type="InterPro" id="IPR008996">
    <property type="entry name" value="IL1/FGF"/>
</dbReference>
<dbReference type="PANTHER" id="PTHR11486">
    <property type="entry name" value="FIBROBLAST GROWTH FACTOR"/>
    <property type="match status" value="1"/>
</dbReference>
<dbReference type="Pfam" id="PF00167">
    <property type="entry name" value="FGF"/>
    <property type="match status" value="1"/>
</dbReference>
<dbReference type="PRINTS" id="PR00263">
    <property type="entry name" value="HBGFFGF"/>
</dbReference>
<dbReference type="PRINTS" id="PR00262">
    <property type="entry name" value="IL1HBGF"/>
</dbReference>
<dbReference type="SMART" id="SM00442">
    <property type="entry name" value="FGF"/>
    <property type="match status" value="1"/>
</dbReference>
<dbReference type="SUPFAM" id="SSF50353">
    <property type="entry name" value="Cytokine"/>
    <property type="match status" value="1"/>
</dbReference>
<dbReference type="PROSITE" id="PS00247">
    <property type="entry name" value="HBGF_FGF"/>
    <property type="match status" value="1"/>
</dbReference>